<proteinExistence type="inferred from homology"/>
<feature type="chain" id="PRO_0000353390" description="DNA-directed RNA polymerase subunit beta'">
    <location>
        <begin position="1"/>
        <end position="1400"/>
    </location>
</feature>
<feature type="binding site" evidence="1">
    <location>
        <position position="70"/>
    </location>
    <ligand>
        <name>Zn(2+)</name>
        <dbReference type="ChEBI" id="CHEBI:29105"/>
        <label>1</label>
    </ligand>
</feature>
<feature type="binding site" evidence="1">
    <location>
        <position position="72"/>
    </location>
    <ligand>
        <name>Zn(2+)</name>
        <dbReference type="ChEBI" id="CHEBI:29105"/>
        <label>1</label>
    </ligand>
</feature>
<feature type="binding site" evidence="1">
    <location>
        <position position="85"/>
    </location>
    <ligand>
        <name>Zn(2+)</name>
        <dbReference type="ChEBI" id="CHEBI:29105"/>
        <label>1</label>
    </ligand>
</feature>
<feature type="binding site" evidence="1">
    <location>
        <position position="88"/>
    </location>
    <ligand>
        <name>Zn(2+)</name>
        <dbReference type="ChEBI" id="CHEBI:29105"/>
        <label>1</label>
    </ligand>
</feature>
<feature type="binding site" evidence="1">
    <location>
        <position position="460"/>
    </location>
    <ligand>
        <name>Mg(2+)</name>
        <dbReference type="ChEBI" id="CHEBI:18420"/>
    </ligand>
</feature>
<feature type="binding site" evidence="1">
    <location>
        <position position="462"/>
    </location>
    <ligand>
        <name>Mg(2+)</name>
        <dbReference type="ChEBI" id="CHEBI:18420"/>
    </ligand>
</feature>
<feature type="binding site" evidence="1">
    <location>
        <position position="464"/>
    </location>
    <ligand>
        <name>Mg(2+)</name>
        <dbReference type="ChEBI" id="CHEBI:18420"/>
    </ligand>
</feature>
<feature type="binding site" evidence="1">
    <location>
        <position position="814"/>
    </location>
    <ligand>
        <name>Zn(2+)</name>
        <dbReference type="ChEBI" id="CHEBI:29105"/>
        <label>2</label>
    </ligand>
</feature>
<feature type="binding site" evidence="1">
    <location>
        <position position="887"/>
    </location>
    <ligand>
        <name>Zn(2+)</name>
        <dbReference type="ChEBI" id="CHEBI:29105"/>
        <label>2</label>
    </ligand>
</feature>
<feature type="binding site" evidence="1">
    <location>
        <position position="894"/>
    </location>
    <ligand>
        <name>Zn(2+)</name>
        <dbReference type="ChEBI" id="CHEBI:29105"/>
        <label>2</label>
    </ligand>
</feature>
<feature type="binding site" evidence="1">
    <location>
        <position position="897"/>
    </location>
    <ligand>
        <name>Zn(2+)</name>
        <dbReference type="ChEBI" id="CHEBI:29105"/>
        <label>2</label>
    </ligand>
</feature>
<accession>A6W398</accession>
<dbReference type="EC" id="2.7.7.6" evidence="1"/>
<dbReference type="EMBL" id="CP000749">
    <property type="protein sequence ID" value="ABR73177.1"/>
    <property type="molecule type" value="Genomic_DNA"/>
</dbReference>
<dbReference type="SMR" id="A6W398"/>
<dbReference type="STRING" id="400668.Mmwyl1_4282"/>
<dbReference type="KEGG" id="mmw:Mmwyl1_4282"/>
<dbReference type="eggNOG" id="COG0086">
    <property type="taxonomic scope" value="Bacteria"/>
</dbReference>
<dbReference type="HOGENOM" id="CLU_000524_3_1_6"/>
<dbReference type="OrthoDB" id="9815296at2"/>
<dbReference type="GO" id="GO:0000428">
    <property type="term" value="C:DNA-directed RNA polymerase complex"/>
    <property type="evidence" value="ECO:0007669"/>
    <property type="project" value="UniProtKB-KW"/>
</dbReference>
<dbReference type="GO" id="GO:0003677">
    <property type="term" value="F:DNA binding"/>
    <property type="evidence" value="ECO:0007669"/>
    <property type="project" value="UniProtKB-UniRule"/>
</dbReference>
<dbReference type="GO" id="GO:0003899">
    <property type="term" value="F:DNA-directed RNA polymerase activity"/>
    <property type="evidence" value="ECO:0007669"/>
    <property type="project" value="UniProtKB-UniRule"/>
</dbReference>
<dbReference type="GO" id="GO:0000287">
    <property type="term" value="F:magnesium ion binding"/>
    <property type="evidence" value="ECO:0007669"/>
    <property type="project" value="UniProtKB-UniRule"/>
</dbReference>
<dbReference type="GO" id="GO:0008270">
    <property type="term" value="F:zinc ion binding"/>
    <property type="evidence" value="ECO:0007669"/>
    <property type="project" value="UniProtKB-UniRule"/>
</dbReference>
<dbReference type="GO" id="GO:0006351">
    <property type="term" value="P:DNA-templated transcription"/>
    <property type="evidence" value="ECO:0007669"/>
    <property type="project" value="UniProtKB-UniRule"/>
</dbReference>
<dbReference type="CDD" id="cd02655">
    <property type="entry name" value="RNAP_beta'_C"/>
    <property type="match status" value="1"/>
</dbReference>
<dbReference type="CDD" id="cd01609">
    <property type="entry name" value="RNAP_beta'_N"/>
    <property type="match status" value="1"/>
</dbReference>
<dbReference type="FunFam" id="1.10.132.30:FF:000003">
    <property type="entry name" value="DNA-directed RNA polymerase subunit beta"/>
    <property type="match status" value="1"/>
</dbReference>
<dbReference type="FunFam" id="1.10.150.390:FF:000002">
    <property type="entry name" value="DNA-directed RNA polymerase subunit beta"/>
    <property type="match status" value="1"/>
</dbReference>
<dbReference type="FunFam" id="1.10.40.90:FF:000001">
    <property type="entry name" value="DNA-directed RNA polymerase subunit beta"/>
    <property type="match status" value="1"/>
</dbReference>
<dbReference type="FunFam" id="4.10.860.120:FF:000001">
    <property type="entry name" value="DNA-directed RNA polymerase subunit beta"/>
    <property type="match status" value="1"/>
</dbReference>
<dbReference type="Gene3D" id="1.10.132.30">
    <property type="match status" value="1"/>
</dbReference>
<dbReference type="Gene3D" id="1.10.150.390">
    <property type="match status" value="1"/>
</dbReference>
<dbReference type="Gene3D" id="1.10.1790.20">
    <property type="match status" value="1"/>
</dbReference>
<dbReference type="Gene3D" id="1.10.40.90">
    <property type="match status" value="1"/>
</dbReference>
<dbReference type="Gene3D" id="2.40.40.20">
    <property type="match status" value="1"/>
</dbReference>
<dbReference type="Gene3D" id="2.40.50.100">
    <property type="match status" value="3"/>
</dbReference>
<dbReference type="Gene3D" id="4.10.860.120">
    <property type="entry name" value="RNA polymerase II, clamp domain"/>
    <property type="match status" value="1"/>
</dbReference>
<dbReference type="Gene3D" id="1.10.274.100">
    <property type="entry name" value="RNA polymerase Rpb1, domain 3"/>
    <property type="match status" value="2"/>
</dbReference>
<dbReference type="HAMAP" id="MF_01322">
    <property type="entry name" value="RNApol_bact_RpoC"/>
    <property type="match status" value="1"/>
</dbReference>
<dbReference type="InterPro" id="IPR045867">
    <property type="entry name" value="DNA-dir_RpoC_beta_prime"/>
</dbReference>
<dbReference type="InterPro" id="IPR012754">
    <property type="entry name" value="DNA-dir_RpoC_beta_prime_bact"/>
</dbReference>
<dbReference type="InterPro" id="IPR000722">
    <property type="entry name" value="RNA_pol_asu"/>
</dbReference>
<dbReference type="InterPro" id="IPR006592">
    <property type="entry name" value="RNA_pol_N"/>
</dbReference>
<dbReference type="InterPro" id="IPR007080">
    <property type="entry name" value="RNA_pol_Rpb1_1"/>
</dbReference>
<dbReference type="InterPro" id="IPR007066">
    <property type="entry name" value="RNA_pol_Rpb1_3"/>
</dbReference>
<dbReference type="InterPro" id="IPR042102">
    <property type="entry name" value="RNA_pol_Rpb1_3_sf"/>
</dbReference>
<dbReference type="InterPro" id="IPR007083">
    <property type="entry name" value="RNA_pol_Rpb1_4"/>
</dbReference>
<dbReference type="InterPro" id="IPR007081">
    <property type="entry name" value="RNA_pol_Rpb1_5"/>
</dbReference>
<dbReference type="InterPro" id="IPR044893">
    <property type="entry name" value="RNA_pol_Rpb1_clamp_domain"/>
</dbReference>
<dbReference type="InterPro" id="IPR038120">
    <property type="entry name" value="Rpb1_funnel_sf"/>
</dbReference>
<dbReference type="NCBIfam" id="TIGR02386">
    <property type="entry name" value="rpoC_TIGR"/>
    <property type="match status" value="1"/>
</dbReference>
<dbReference type="PANTHER" id="PTHR19376">
    <property type="entry name" value="DNA-DIRECTED RNA POLYMERASE"/>
    <property type="match status" value="1"/>
</dbReference>
<dbReference type="PANTHER" id="PTHR19376:SF54">
    <property type="entry name" value="DNA-DIRECTED RNA POLYMERASE SUBUNIT BETA"/>
    <property type="match status" value="1"/>
</dbReference>
<dbReference type="Pfam" id="PF04997">
    <property type="entry name" value="RNA_pol_Rpb1_1"/>
    <property type="match status" value="1"/>
</dbReference>
<dbReference type="Pfam" id="PF00623">
    <property type="entry name" value="RNA_pol_Rpb1_2"/>
    <property type="match status" value="2"/>
</dbReference>
<dbReference type="Pfam" id="PF04983">
    <property type="entry name" value="RNA_pol_Rpb1_3"/>
    <property type="match status" value="1"/>
</dbReference>
<dbReference type="Pfam" id="PF05000">
    <property type="entry name" value="RNA_pol_Rpb1_4"/>
    <property type="match status" value="1"/>
</dbReference>
<dbReference type="Pfam" id="PF04998">
    <property type="entry name" value="RNA_pol_Rpb1_5"/>
    <property type="match status" value="1"/>
</dbReference>
<dbReference type="SMART" id="SM00663">
    <property type="entry name" value="RPOLA_N"/>
    <property type="match status" value="1"/>
</dbReference>
<dbReference type="SUPFAM" id="SSF64484">
    <property type="entry name" value="beta and beta-prime subunits of DNA dependent RNA-polymerase"/>
    <property type="match status" value="1"/>
</dbReference>
<reference key="1">
    <citation type="submission" date="2007-06" db="EMBL/GenBank/DDBJ databases">
        <title>Complete sequence of Marinomonas sp. MWYL1.</title>
        <authorList>
            <consortium name="US DOE Joint Genome Institute"/>
            <person name="Copeland A."/>
            <person name="Lucas S."/>
            <person name="Lapidus A."/>
            <person name="Barry K."/>
            <person name="Glavina del Rio T."/>
            <person name="Dalin E."/>
            <person name="Tice H."/>
            <person name="Pitluck S."/>
            <person name="Kiss H."/>
            <person name="Brettin T."/>
            <person name="Bruce D."/>
            <person name="Detter J.C."/>
            <person name="Han C."/>
            <person name="Schmutz J."/>
            <person name="Larimer F."/>
            <person name="Land M."/>
            <person name="Hauser L."/>
            <person name="Kyrpides N."/>
            <person name="Kim E."/>
            <person name="Johnston A.W.B."/>
            <person name="Todd J.D."/>
            <person name="Rogers R."/>
            <person name="Wexler M."/>
            <person name="Bond P.L."/>
            <person name="Li Y."/>
            <person name="Richardson P."/>
        </authorList>
    </citation>
    <scope>NUCLEOTIDE SEQUENCE [LARGE SCALE GENOMIC DNA]</scope>
    <source>
        <strain>MWYL1</strain>
    </source>
</reference>
<name>RPOC_MARMS</name>
<comment type="function">
    <text evidence="1">DNA-dependent RNA polymerase catalyzes the transcription of DNA into RNA using the four ribonucleoside triphosphates as substrates.</text>
</comment>
<comment type="catalytic activity">
    <reaction evidence="1">
        <text>RNA(n) + a ribonucleoside 5'-triphosphate = RNA(n+1) + diphosphate</text>
        <dbReference type="Rhea" id="RHEA:21248"/>
        <dbReference type="Rhea" id="RHEA-COMP:14527"/>
        <dbReference type="Rhea" id="RHEA-COMP:17342"/>
        <dbReference type="ChEBI" id="CHEBI:33019"/>
        <dbReference type="ChEBI" id="CHEBI:61557"/>
        <dbReference type="ChEBI" id="CHEBI:140395"/>
        <dbReference type="EC" id="2.7.7.6"/>
    </reaction>
</comment>
<comment type="cofactor">
    <cofactor evidence="1">
        <name>Mg(2+)</name>
        <dbReference type="ChEBI" id="CHEBI:18420"/>
    </cofactor>
    <text evidence="1">Binds 1 Mg(2+) ion per subunit.</text>
</comment>
<comment type="cofactor">
    <cofactor evidence="1">
        <name>Zn(2+)</name>
        <dbReference type="ChEBI" id="CHEBI:29105"/>
    </cofactor>
    <text evidence="1">Binds 2 Zn(2+) ions per subunit.</text>
</comment>
<comment type="subunit">
    <text evidence="1">The RNAP catalytic core consists of 2 alpha, 1 beta, 1 beta' and 1 omega subunit. When a sigma factor is associated with the core the holoenzyme is formed, which can initiate transcription.</text>
</comment>
<comment type="similarity">
    <text evidence="1">Belongs to the RNA polymerase beta' chain family.</text>
</comment>
<organism>
    <name type="scientific">Marinomonas sp. (strain MWYL1)</name>
    <dbReference type="NCBI Taxonomy" id="400668"/>
    <lineage>
        <taxon>Bacteria</taxon>
        <taxon>Pseudomonadati</taxon>
        <taxon>Pseudomonadota</taxon>
        <taxon>Gammaproteobacteria</taxon>
        <taxon>Oceanospirillales</taxon>
        <taxon>Oceanospirillaceae</taxon>
        <taxon>Marinomonas</taxon>
    </lineage>
</organism>
<evidence type="ECO:0000255" key="1">
    <source>
        <dbReference type="HAMAP-Rule" id="MF_01322"/>
    </source>
</evidence>
<gene>
    <name evidence="1" type="primary">rpoC</name>
    <name type="ordered locus">Mmwyl1_4282</name>
</gene>
<keyword id="KW-0240">DNA-directed RNA polymerase</keyword>
<keyword id="KW-0460">Magnesium</keyword>
<keyword id="KW-0479">Metal-binding</keyword>
<keyword id="KW-0548">Nucleotidyltransferase</keyword>
<keyword id="KW-0804">Transcription</keyword>
<keyword id="KW-0808">Transferase</keyword>
<keyword id="KW-0862">Zinc</keyword>
<protein>
    <recommendedName>
        <fullName evidence="1">DNA-directed RNA polymerase subunit beta'</fullName>
        <shortName evidence="1">RNAP subunit beta'</shortName>
        <ecNumber evidence="1">2.7.7.6</ecNumber>
    </recommendedName>
    <alternativeName>
        <fullName evidence="1">RNA polymerase subunit beta'</fullName>
    </alternativeName>
    <alternativeName>
        <fullName evidence="1">Transcriptase subunit beta'</fullName>
    </alternativeName>
</protein>
<sequence>MKDLLGLLKSQGQSDEFDAIRIGLASPDMIRSWSYGEVKKPETINYRTFKPERDGLFCAKIFGPIKDYECLCGKYKRLKHRGVICEKCGVEVALSKVRRERMGHIELASPVAHIWFLKSLPSRIGLILDMTLRDIERVLYFESFIVIDPGMTTLDKGQLLNDEQYFEALEEFGDEFDARMGAEAVQMLLRDLDMPVEINSMREELNSTNSETRIKKLSKRLKLVEAFYHSGNNPEWMVLDVLPVLPPDLRPLVPLEGGRFATSDLNDLYRRVINRNNRLKRLLELSAPDIIVRNEKRMLQESVDALLDNGRRGRAITGSNKRPLKSLADMIKGKQGRFRQNLLGKRVDYSGRSVITVGPSLRLHQCGLPKKMALELFKPFIFSKLELRGMATTIKAAKKMVERETPEVWDILDEVIREHPVMLNRAPTLHRLGIQAFEPMLIEGKAIQLHPLVCAAYNADFDGDQMAVHVPLTIEAQLEARALMMSTNNILSPANGEPIIVPSQDVVLGLYYMTREKINAKGEGMAFSDIKEVHRAYGAKQVELHAKVKVRISQVDTTLDGDKVPSTFIADTTVGRALLFDIVPDGLPFSVVNQTMKKKAISNLINECYRKVGLKESCIFADQLMYTGFAYATASGSSVGVDDFVIPPEKAAIIAKAEAEVKEIEYQYADGLVTQGEKYNKVIDLWSRTNETVTEAMMKNLAKEMTVNKAGETVEQQSFNSVYMMADSGARGSVAQMRQLGGMRGLMAKPDGSIIETPITANFREGLSVLQYFTSTHGARKGLADTALKTANSGYLTRRLVDVAQDLVITEVDCGSTNGISVAAMIEGGDVVVPLGHRVLGRVVAQDVIDGKGDFVLAAGTLIDEHDVRTIEAAGVDEMIIRSVITCNTRHGVCAKCYGRDLARGHQVNIGEAIGVVAAQSIGEPGTQLTMRTFHIGGAASRASAIDSVQVKSAGTVRFNKMKSIERHTGHLVVASRSSELAIADEAGREKERYKLPYGAVLSVREGDQVTAGQIVANWDPHTHPIVSEMEGRLEFSGMEENVTIRRQSDEMTGLTTIEVMEMRDRPAAGKDIRPMIAVVDAEGNPVLIPGTESPVQYMLPEKALLSLDHGATVKSGEVLARIPQESIGNKDITGGLPRVADLFEARRPKDPAVMAETSGVVSFGKETKGKIRLVITPQNGDEPVETLIPKWRQINIFDGEEVAKGEIIADGPLSPHDILRLQGVEALADYITNEVQEVYRLQGVVINDKHIEVIVNQMLRKVEVGESGDTDLIQGDQVEYTHLLDANEKAEAEGKFPAKFERVLLGITKASLATESFISAASFQETTRVLTEGAVTGKKDHLRGLKENVVVGRLIPAGTGLAYHNERKRKKELALAAKEGSSTVSASDVEEALSAALKD</sequence>